<evidence type="ECO:0000255" key="1">
    <source>
        <dbReference type="HAMAP-Rule" id="MF_04062"/>
    </source>
</evidence>
<proteinExistence type="inferred from homology"/>
<keyword id="KW-1157">Cap snatching</keyword>
<keyword id="KW-1262">Eukaryotic host gene expression shutoff by virus</keyword>
<keyword id="KW-1191">Eukaryotic host transcription shutoff by virus</keyword>
<keyword id="KW-1190">Host gene expression shutoff by virus</keyword>
<keyword id="KW-1045">Host mitochondrion</keyword>
<keyword id="KW-1048">Host nucleus</keyword>
<keyword id="KW-0945">Host-virus interaction</keyword>
<keyword id="KW-1090">Inhibition of host innate immune response by virus</keyword>
<keyword id="KW-1097">Inhibition of host MAVS by virus</keyword>
<keyword id="KW-1113">Inhibition of host RLR pathway by virus</keyword>
<keyword id="KW-1104">Inhibition of host RNA polymerase II by virus</keyword>
<keyword id="KW-0506">mRNA capping</keyword>
<keyword id="KW-0507">mRNA processing</keyword>
<keyword id="KW-0899">Viral immunoevasion</keyword>
<keyword id="KW-1195">Viral transcription</keyword>
<keyword id="KW-0946">Virion</keyword>
<feature type="chain" id="PRO_0000078837" description="Polymerase basic protein 2">
    <location>
        <begin position="1"/>
        <end position="759"/>
    </location>
</feature>
<feature type="short sequence motif" description="Nuclear localization signal" evidence="1">
    <location>
        <begin position="736"/>
        <end position="739"/>
    </location>
</feature>
<feature type="site" description="Mammalian adaptation" evidence="1">
    <location>
        <position position="627"/>
    </location>
</feature>
<name>PB2_I57A5</name>
<organism>
    <name type="scientific">Influenza A virus (strain A/Singapore/1/1957 H2N2)</name>
    <dbReference type="NCBI Taxonomy" id="382781"/>
    <lineage>
        <taxon>Viruses</taxon>
        <taxon>Riboviria</taxon>
        <taxon>Orthornavirae</taxon>
        <taxon>Negarnaviricota</taxon>
        <taxon>Polyploviricotina</taxon>
        <taxon>Insthoviricetes</taxon>
        <taxon>Articulavirales</taxon>
        <taxon>Orthomyxoviridae</taxon>
        <taxon>Alphainfluenzavirus</taxon>
        <taxon>Alphainfluenzavirus influenzae</taxon>
        <taxon>Influenza A virus</taxon>
    </lineage>
</organism>
<accession>P26111</accession>
<accession>Q6XUA4</accession>
<dbReference type="EMBL" id="M73521">
    <property type="protein sequence ID" value="AAA43127.1"/>
    <property type="molecule type" value="Genomic_RNA"/>
</dbReference>
<dbReference type="EMBL" id="AY209935">
    <property type="protein sequence ID" value="AAO46251.1"/>
    <property type="molecule type" value="Genomic_RNA"/>
</dbReference>
<dbReference type="SMR" id="P26111"/>
<dbReference type="PRO" id="PR:P26111"/>
<dbReference type="GO" id="GO:0033650">
    <property type="term" value="C:host cell mitochondrion"/>
    <property type="evidence" value="ECO:0007669"/>
    <property type="project" value="UniProtKB-SubCell"/>
</dbReference>
<dbReference type="GO" id="GO:0042025">
    <property type="term" value="C:host cell nucleus"/>
    <property type="evidence" value="ECO:0007669"/>
    <property type="project" value="UniProtKB-SubCell"/>
</dbReference>
<dbReference type="GO" id="GO:0044423">
    <property type="term" value="C:virion component"/>
    <property type="evidence" value="ECO:0007669"/>
    <property type="project" value="UniProtKB-UniRule"/>
</dbReference>
<dbReference type="GO" id="GO:0003723">
    <property type="term" value="F:RNA binding"/>
    <property type="evidence" value="ECO:0007669"/>
    <property type="project" value="UniProtKB-UniRule"/>
</dbReference>
<dbReference type="GO" id="GO:0003968">
    <property type="term" value="F:RNA-directed RNA polymerase activity"/>
    <property type="evidence" value="ECO:0007669"/>
    <property type="project" value="UniProtKB-UniRule"/>
</dbReference>
<dbReference type="GO" id="GO:0006370">
    <property type="term" value="P:7-methylguanosine mRNA capping"/>
    <property type="evidence" value="ECO:0007669"/>
    <property type="project" value="UniProtKB-UniRule"/>
</dbReference>
<dbReference type="GO" id="GO:0075526">
    <property type="term" value="P:cap snatching"/>
    <property type="evidence" value="ECO:0007669"/>
    <property type="project" value="UniProtKB-UniRule"/>
</dbReference>
<dbReference type="GO" id="GO:0006351">
    <property type="term" value="P:DNA-templated transcription"/>
    <property type="evidence" value="ECO:0007669"/>
    <property type="project" value="UniProtKB-UniRule"/>
</dbReference>
<dbReference type="GO" id="GO:0039545">
    <property type="term" value="P:symbiont-mediated suppression of host cytoplasmic pattern recognition receptor signaling pathway via inhibition of MAVS activity"/>
    <property type="evidence" value="ECO:0007669"/>
    <property type="project" value="UniProtKB-UniRule"/>
</dbReference>
<dbReference type="GO" id="GO:0039657">
    <property type="term" value="P:symbiont-mediated suppression of host gene expression"/>
    <property type="evidence" value="ECO:0007669"/>
    <property type="project" value="UniProtKB-KW"/>
</dbReference>
<dbReference type="GO" id="GO:0039523">
    <property type="term" value="P:symbiont-mediated suppression of host mRNA transcription via inhibition of RNA polymerase II activity"/>
    <property type="evidence" value="ECO:0007669"/>
    <property type="project" value="UniProtKB-UniRule"/>
</dbReference>
<dbReference type="GO" id="GO:0039694">
    <property type="term" value="P:viral RNA genome replication"/>
    <property type="evidence" value="ECO:0007669"/>
    <property type="project" value="InterPro"/>
</dbReference>
<dbReference type="FunFam" id="3.30.30.90:FF:000001">
    <property type="entry name" value="Polymerase basic protein 2"/>
    <property type="match status" value="1"/>
</dbReference>
<dbReference type="Gene3D" id="3.30.30.90">
    <property type="entry name" value="Polymerase Basic Protein 2, C-terminal domain"/>
    <property type="match status" value="1"/>
</dbReference>
<dbReference type="HAMAP" id="MF_04062">
    <property type="entry name" value="INV_PB2"/>
    <property type="match status" value="1"/>
</dbReference>
<dbReference type="InterPro" id="IPR049110">
    <property type="entry name" value="Flu_PB2_2nd"/>
</dbReference>
<dbReference type="InterPro" id="IPR049114">
    <property type="entry name" value="Flu_PB2_6th"/>
</dbReference>
<dbReference type="InterPro" id="IPR049115">
    <property type="entry name" value="Flu_PB2_C"/>
</dbReference>
<dbReference type="InterPro" id="IPR048298">
    <property type="entry name" value="Flu_PB2_CAP-bd"/>
</dbReference>
<dbReference type="InterPro" id="IPR049111">
    <property type="entry name" value="Flu_PB2_middle"/>
</dbReference>
<dbReference type="InterPro" id="IPR049106">
    <property type="entry name" value="Flu_PB2_N"/>
</dbReference>
<dbReference type="InterPro" id="IPR001591">
    <property type="entry name" value="INV_PB2"/>
</dbReference>
<dbReference type="InterPro" id="IPR049113">
    <property type="entry name" value="PB2_helical"/>
</dbReference>
<dbReference type="InterPro" id="IPR037258">
    <property type="entry name" value="PDB2_C"/>
</dbReference>
<dbReference type="Pfam" id="PF20947">
    <property type="entry name" value="Flu_PB2_1st"/>
    <property type="match status" value="1"/>
</dbReference>
<dbReference type="Pfam" id="PF20948">
    <property type="entry name" value="Flu_PB2_2nd"/>
    <property type="match status" value="1"/>
</dbReference>
<dbReference type="Pfam" id="PF20949">
    <property type="entry name" value="Flu_PB2_3rd"/>
    <property type="match status" value="1"/>
</dbReference>
<dbReference type="Pfam" id="PF20950">
    <property type="entry name" value="Flu_PB2_4th"/>
    <property type="match status" value="1"/>
</dbReference>
<dbReference type="Pfam" id="PF00604">
    <property type="entry name" value="Flu_PB2_5th"/>
    <property type="match status" value="1"/>
</dbReference>
<dbReference type="Pfam" id="PF20951">
    <property type="entry name" value="Flu_PB2_6th"/>
    <property type="match status" value="1"/>
</dbReference>
<dbReference type="Pfam" id="PF20952">
    <property type="entry name" value="Flu_PB2_7th"/>
    <property type="match status" value="1"/>
</dbReference>
<dbReference type="SUPFAM" id="SSF160453">
    <property type="entry name" value="PB2 C-terminal domain-like"/>
    <property type="match status" value="1"/>
</dbReference>
<reference key="1">
    <citation type="journal article" date="1990" name="J. Virol.">
        <title>Evolution of influenza A virus PB2 genes: implications for evolution of the ribonucleoprotein complex and origin of human influenza A virus.</title>
        <authorList>
            <person name="Gorman O.T."/>
            <person name="Donis R.O."/>
            <person name="Kawaoka Y."/>
            <person name="Webster R.G."/>
        </authorList>
    </citation>
    <scope>NUCLEOTIDE SEQUENCE [GENOMIC RNA]</scope>
</reference>
<reference key="2">
    <citation type="journal article" date="2004" name="Virology">
        <title>Genetic analysis of human H2N2 and early H3N2 influenza viruses, 1957-1972: evidence for genetic divergence and multiple reassortment events.</title>
        <authorList>
            <person name="Lindstrom S.E."/>
            <person name="Cox N.J."/>
            <person name="Klimov A."/>
        </authorList>
    </citation>
    <scope>NUCLEOTIDE SEQUENCE [GENOMIC RNA]</scope>
</reference>
<sequence>MERIKELRNLMSQSRTREILTKTTVDHMAIIKKYTSGRQEKNPSLRMKWMMAMKYPITADKRITEMIPERNEQGQTLWSKMNDAGSDRVMVSPLAVTWWNRNGPMTSTVHYPKIYKTYFEKVERLKHGTFGPVHFRNQVKIRRRVDINPGHADLSAKEAQDVIMEVVFPNEVGARILTSESQLTITKEKKEELQDCKISPLMVAYMLERELVRKTRFLPVAGGTSSVYIEVLHLTQGTCWEQMYTPGGEVRNDDVDQSLIIAARNIVRRAAVSADPLASLLEMCHSTQIGGTRMVDILRQNPTEEQAVDICKAAMGLKISSSFSFGGFTFKRTSGSSVKREEEMLTGNLQTLKIRVHEGYEEFTMVGKRATAILRKATRKLIQLIVSGRDEQSIAEAIIVAMVFSQEDCMIKAVRGDLNFVNRANQRLNPMHQLLRHFQKDAKVLFQNWGIEHIDNVMGMIGVLPDMTPSTEMSMRGVRVSKMGVDEYSSAERVVVSIDRFLRVRDQRGNVLLSPEEVSETQGTEKLTITYSSSMMWEINGPESVLVNTYQWIIRNWETVKIQWSQNPTMLYNKMEFEPFQSLVPKAIRGQYSGFVRTLFQQMRDVLGTFDTTQIIKLLPFAAAPPKQSRMQFSSLTVNVRGSGMRILVRGNSPVFNYNKTTKRLTILGKDAGTLTEDPDEGTSGVESAVLRGFLILGKEDRRYGPALSINELSNLAKGEKANVLIGQGDVVLVMKRKRDSSILTDSQTATKRIRMAIN</sequence>
<gene>
    <name evidence="1" type="primary">PB2</name>
</gene>
<protein>
    <recommendedName>
        <fullName evidence="1">Polymerase basic protein 2</fullName>
    </recommendedName>
    <alternativeName>
        <fullName evidence="1">RNA-directed RNA polymerase subunit P3</fullName>
    </alternativeName>
</protein>
<organismHost>
    <name type="scientific">Aves</name>
    <dbReference type="NCBI Taxonomy" id="8782"/>
</organismHost>
<organismHost>
    <name type="scientific">Homo sapiens</name>
    <name type="common">Human</name>
    <dbReference type="NCBI Taxonomy" id="9606"/>
</organismHost>
<comment type="function">
    <text evidence="1">Plays an essential role in transcription initiation and cap-stealing mechanism, in which cellular capped pre-mRNAs are used to generate primers for viral transcription. Recognizes and binds the 7-methylguanosine-containing cap of the target pre-RNA which is subsequently cleaved after 10-13 nucleotides by the viral protein PA. Plays a role in the initiation of the viral genome replication and modulates the activity of the ribonucleoprotein (RNP) complex. In addition, participates in the inhibition of type I interferon induction through interaction with and inhibition of the host mitochondrial antiviral signaling protein MAVS.</text>
</comment>
<comment type="subunit">
    <text evidence="1">Influenza RNA polymerase is composed of three subunits: PB1, PB2 and PA. Interacts (via N-terminus) with PB1 (via C-terminus). Interacts with nucleoprotein NP (via N-terminus). Interacts (via N-terminus) with host MAVS (via N-terminus); this interaction inhibits host innate immune response.</text>
</comment>
<comment type="subcellular location">
    <subcellularLocation>
        <location evidence="1">Virion</location>
    </subcellularLocation>
    <subcellularLocation>
        <location evidence="1">Host nucleus</location>
    </subcellularLocation>
    <subcellularLocation>
        <location evidence="1">Host mitochondrion</location>
    </subcellularLocation>
</comment>
<comment type="similarity">
    <text evidence="1">Belongs to the influenza viruses PB2 family.</text>
</comment>